<keyword id="KW-0066">ATP synthesis</keyword>
<keyword id="KW-0997">Cell inner membrane</keyword>
<keyword id="KW-1003">Cell membrane</keyword>
<keyword id="KW-0139">CF(1)</keyword>
<keyword id="KW-0375">Hydrogen ion transport</keyword>
<keyword id="KW-0406">Ion transport</keyword>
<keyword id="KW-0472">Membrane</keyword>
<keyword id="KW-0813">Transport</keyword>
<comment type="function">
    <text evidence="1">Produces ATP from ADP in the presence of a proton gradient across the membrane. The gamma chain is believed to be important in regulating ATPase activity and the flow of protons through the CF(0) complex.</text>
</comment>
<comment type="subunit">
    <text evidence="1">F-type ATPases have 2 components, CF(1) - the catalytic core - and CF(0) - the membrane proton channel. CF(1) has five subunits: alpha(3), beta(3), gamma(1), delta(1), epsilon(1). CF(0) has three main subunits: a, b and c.</text>
</comment>
<comment type="subcellular location">
    <subcellularLocation>
        <location evidence="1">Cell inner membrane</location>
        <topology evidence="1">Peripheral membrane protein</topology>
    </subcellularLocation>
</comment>
<comment type="similarity">
    <text evidence="1">Belongs to the ATPase gamma chain family.</text>
</comment>
<proteinExistence type="inferred from homology"/>
<evidence type="ECO:0000255" key="1">
    <source>
        <dbReference type="HAMAP-Rule" id="MF_00815"/>
    </source>
</evidence>
<name>ATPG_SALCH</name>
<protein>
    <recommendedName>
        <fullName evidence="1">ATP synthase gamma chain</fullName>
    </recommendedName>
    <alternativeName>
        <fullName evidence="1">ATP synthase F1 sector gamma subunit</fullName>
    </alternativeName>
    <alternativeName>
        <fullName evidence="1">F-ATPase gamma subunit</fullName>
    </alternativeName>
</protein>
<accession>Q57HX8</accession>
<feature type="chain" id="PRO_0000073365" description="ATP synthase gamma chain">
    <location>
        <begin position="1"/>
        <end position="287"/>
    </location>
</feature>
<gene>
    <name evidence="1" type="primary">atpG</name>
    <name type="ordered locus">SCH_3778</name>
</gene>
<sequence length="287" mass="31555">MAGAKEIRSKIASVQNTQKITKAMEMVAASKMRKSQDRMAASRPYAETMRKVIGHLANGNLEYKHPYLEERDVKRVGYLVVSTDRGLCGGLNINLFKKLLADMKAWSDKGVQCELAMIGSKGVSFFNSVGGNVVAQVTGMGDNPSLSELIGPVKVMLQAYDEGRLDKLYIVSNKFINTMSQVPTITQLLPLPASEDDDLKRKAWDYLYEPDPKALLDTLLRRYVESQVYQGVVENLASEQAARMVAMKAATDNGGSLIKELQLVYNKARQASITQELTEIVSGAAAV</sequence>
<organism>
    <name type="scientific">Salmonella choleraesuis (strain SC-B67)</name>
    <dbReference type="NCBI Taxonomy" id="321314"/>
    <lineage>
        <taxon>Bacteria</taxon>
        <taxon>Pseudomonadati</taxon>
        <taxon>Pseudomonadota</taxon>
        <taxon>Gammaproteobacteria</taxon>
        <taxon>Enterobacterales</taxon>
        <taxon>Enterobacteriaceae</taxon>
        <taxon>Salmonella</taxon>
    </lineage>
</organism>
<dbReference type="EMBL" id="AE017220">
    <property type="protein sequence ID" value="AAX67684.1"/>
    <property type="molecule type" value="Genomic_DNA"/>
</dbReference>
<dbReference type="RefSeq" id="WP_000896506.1">
    <property type="nucleotide sequence ID" value="NC_006905.1"/>
</dbReference>
<dbReference type="SMR" id="Q57HX8"/>
<dbReference type="GeneID" id="66758155"/>
<dbReference type="KEGG" id="sec:SCH_3778"/>
<dbReference type="HOGENOM" id="CLU_050669_0_1_6"/>
<dbReference type="Proteomes" id="UP000000538">
    <property type="component" value="Chromosome"/>
</dbReference>
<dbReference type="GO" id="GO:0005886">
    <property type="term" value="C:plasma membrane"/>
    <property type="evidence" value="ECO:0007669"/>
    <property type="project" value="UniProtKB-SubCell"/>
</dbReference>
<dbReference type="GO" id="GO:0045259">
    <property type="term" value="C:proton-transporting ATP synthase complex"/>
    <property type="evidence" value="ECO:0007669"/>
    <property type="project" value="UniProtKB-KW"/>
</dbReference>
<dbReference type="GO" id="GO:0005524">
    <property type="term" value="F:ATP binding"/>
    <property type="evidence" value="ECO:0007669"/>
    <property type="project" value="UniProtKB-UniRule"/>
</dbReference>
<dbReference type="GO" id="GO:0046933">
    <property type="term" value="F:proton-transporting ATP synthase activity, rotational mechanism"/>
    <property type="evidence" value="ECO:0007669"/>
    <property type="project" value="UniProtKB-UniRule"/>
</dbReference>
<dbReference type="GO" id="GO:0042777">
    <property type="term" value="P:proton motive force-driven plasma membrane ATP synthesis"/>
    <property type="evidence" value="ECO:0007669"/>
    <property type="project" value="UniProtKB-UniRule"/>
</dbReference>
<dbReference type="CDD" id="cd12151">
    <property type="entry name" value="F1-ATPase_gamma"/>
    <property type="match status" value="1"/>
</dbReference>
<dbReference type="FunFam" id="1.10.287.80:FF:000005">
    <property type="entry name" value="ATP synthase gamma chain"/>
    <property type="match status" value="2"/>
</dbReference>
<dbReference type="FunFam" id="3.40.1380.10:FF:000001">
    <property type="entry name" value="ATP synthase gamma chain"/>
    <property type="match status" value="1"/>
</dbReference>
<dbReference type="Gene3D" id="3.40.1380.10">
    <property type="match status" value="1"/>
</dbReference>
<dbReference type="Gene3D" id="1.10.287.80">
    <property type="entry name" value="ATP synthase, gamma subunit, helix hairpin domain"/>
    <property type="match status" value="1"/>
</dbReference>
<dbReference type="HAMAP" id="MF_00815">
    <property type="entry name" value="ATP_synth_gamma_bact"/>
    <property type="match status" value="1"/>
</dbReference>
<dbReference type="InterPro" id="IPR035968">
    <property type="entry name" value="ATP_synth_F1_ATPase_gsu"/>
</dbReference>
<dbReference type="InterPro" id="IPR000131">
    <property type="entry name" value="ATP_synth_F1_gsu"/>
</dbReference>
<dbReference type="InterPro" id="IPR023632">
    <property type="entry name" value="ATP_synth_F1_gsu_CS"/>
</dbReference>
<dbReference type="NCBIfam" id="TIGR01146">
    <property type="entry name" value="ATPsyn_F1gamma"/>
    <property type="match status" value="1"/>
</dbReference>
<dbReference type="NCBIfam" id="NF004144">
    <property type="entry name" value="PRK05621.1-1"/>
    <property type="match status" value="1"/>
</dbReference>
<dbReference type="PANTHER" id="PTHR11693">
    <property type="entry name" value="ATP SYNTHASE GAMMA CHAIN"/>
    <property type="match status" value="1"/>
</dbReference>
<dbReference type="PANTHER" id="PTHR11693:SF22">
    <property type="entry name" value="ATP SYNTHASE SUBUNIT GAMMA, MITOCHONDRIAL"/>
    <property type="match status" value="1"/>
</dbReference>
<dbReference type="Pfam" id="PF00231">
    <property type="entry name" value="ATP-synt"/>
    <property type="match status" value="1"/>
</dbReference>
<dbReference type="PRINTS" id="PR00126">
    <property type="entry name" value="ATPASEGAMMA"/>
</dbReference>
<dbReference type="SUPFAM" id="SSF52943">
    <property type="entry name" value="ATP synthase (F1-ATPase), gamma subunit"/>
    <property type="match status" value="1"/>
</dbReference>
<dbReference type="PROSITE" id="PS00153">
    <property type="entry name" value="ATPASE_GAMMA"/>
    <property type="match status" value="1"/>
</dbReference>
<reference key="1">
    <citation type="journal article" date="2005" name="Nucleic Acids Res.">
        <title>The genome sequence of Salmonella enterica serovar Choleraesuis, a highly invasive and resistant zoonotic pathogen.</title>
        <authorList>
            <person name="Chiu C.-H."/>
            <person name="Tang P."/>
            <person name="Chu C."/>
            <person name="Hu S."/>
            <person name="Bao Q."/>
            <person name="Yu J."/>
            <person name="Chou Y.-Y."/>
            <person name="Wang H.-S."/>
            <person name="Lee Y.-S."/>
        </authorList>
    </citation>
    <scope>NUCLEOTIDE SEQUENCE [LARGE SCALE GENOMIC DNA]</scope>
    <source>
        <strain>SC-B67</strain>
    </source>
</reference>